<keyword id="KW-0884">PQQ biosynthesis</keyword>
<keyword id="KW-1185">Reference proteome</keyword>
<keyword id="KW-0813">Transport</keyword>
<evidence type="ECO:0000255" key="1">
    <source>
        <dbReference type="HAMAP-Rule" id="MF_00653"/>
    </source>
</evidence>
<accession>A1K4P9</accession>
<name>PQQB_AZOSB</name>
<feature type="chain" id="PRO_1000061647" description="Coenzyme PQQ synthesis protein B">
    <location>
        <begin position="1"/>
        <end position="304"/>
    </location>
</feature>
<proteinExistence type="inferred from homology"/>
<protein>
    <recommendedName>
        <fullName evidence="1">Coenzyme PQQ synthesis protein B</fullName>
    </recommendedName>
    <alternativeName>
        <fullName evidence="1">Pyrroloquinoline quinone biosynthesis protein B</fullName>
    </alternativeName>
</protein>
<dbReference type="EMBL" id="AM406670">
    <property type="protein sequence ID" value="CAL93804.1"/>
    <property type="molecule type" value="Genomic_DNA"/>
</dbReference>
<dbReference type="RefSeq" id="WP_011764920.1">
    <property type="nucleotide sequence ID" value="NC_008702.1"/>
</dbReference>
<dbReference type="SMR" id="A1K4P9"/>
<dbReference type="STRING" id="62928.azo1187"/>
<dbReference type="KEGG" id="azo:azo1187"/>
<dbReference type="eggNOG" id="COG1235">
    <property type="taxonomic scope" value="Bacteria"/>
</dbReference>
<dbReference type="HOGENOM" id="CLU_061120_0_0_4"/>
<dbReference type="UniPathway" id="UPA00539"/>
<dbReference type="Proteomes" id="UP000002588">
    <property type="component" value="Chromosome"/>
</dbReference>
<dbReference type="GO" id="GO:0018189">
    <property type="term" value="P:pyrroloquinoline quinone biosynthetic process"/>
    <property type="evidence" value="ECO:0007669"/>
    <property type="project" value="UniProtKB-UniRule"/>
</dbReference>
<dbReference type="CDD" id="cd16274">
    <property type="entry name" value="PQQB-like_MBL-fold"/>
    <property type="match status" value="1"/>
</dbReference>
<dbReference type="Gene3D" id="3.60.15.10">
    <property type="entry name" value="Ribonuclease Z/Hydroxyacylglutathione hydrolase-like"/>
    <property type="match status" value="1"/>
</dbReference>
<dbReference type="HAMAP" id="MF_00653">
    <property type="entry name" value="PQQ_syn_PqqB"/>
    <property type="match status" value="1"/>
</dbReference>
<dbReference type="InterPro" id="IPR001279">
    <property type="entry name" value="Metallo-B-lactamas"/>
</dbReference>
<dbReference type="InterPro" id="IPR011842">
    <property type="entry name" value="PQQ_synth_PqqB"/>
</dbReference>
<dbReference type="InterPro" id="IPR036866">
    <property type="entry name" value="RibonucZ/Hydroxyglut_hydro"/>
</dbReference>
<dbReference type="NCBIfam" id="TIGR02108">
    <property type="entry name" value="PQQ_syn_pqqB"/>
    <property type="match status" value="1"/>
</dbReference>
<dbReference type="Pfam" id="PF12706">
    <property type="entry name" value="Lactamase_B_2"/>
    <property type="match status" value="1"/>
</dbReference>
<dbReference type="SUPFAM" id="SSF56281">
    <property type="entry name" value="Metallo-hydrolase/oxidoreductase"/>
    <property type="match status" value="1"/>
</dbReference>
<comment type="function">
    <text evidence="1">May be involved in the transport of PQQ or its precursor to the periplasm.</text>
</comment>
<comment type="pathway">
    <text evidence="1">Cofactor biosynthesis; pyrroloquinoline quinone biosynthesis.</text>
</comment>
<comment type="similarity">
    <text evidence="1">Belongs to the PqqB family.</text>
</comment>
<sequence length="304" mass="32842">MKVRVLGSAAGGGFPQWNCNCPNCDGLRRGTVRARARTQSSIAVTGDDENWVLFNASPDVLQQLREAPELQPARALRDTAIRAIVLIDAQIDHTTGLLMLREHRQPHALWCTAPVREDLSTGNPLFGVLGHYCGLDLNEIPLQGGFDIAGVPGVGFAALPLTSNAPPYSPRRDKPVPGDNIGVTLTDTRSGRRLFYAPGLGEMEPHVWAAMQAADCVLVDGTLWTDDEMIRLGASSKTSRAMGHLPQSGPGGMLEWLDRLPASTRKVLIHINNTNPILDEDSPQRAELAAHGVEVAWDGMVLSL</sequence>
<reference key="1">
    <citation type="journal article" date="2006" name="Nat. Biotechnol.">
        <title>Complete genome of the mutualistic, N2-fixing grass endophyte Azoarcus sp. strain BH72.</title>
        <authorList>
            <person name="Krause A."/>
            <person name="Ramakumar A."/>
            <person name="Bartels D."/>
            <person name="Battistoni F."/>
            <person name="Bekel T."/>
            <person name="Boch J."/>
            <person name="Boehm M."/>
            <person name="Friedrich F."/>
            <person name="Hurek T."/>
            <person name="Krause L."/>
            <person name="Linke B."/>
            <person name="McHardy A.C."/>
            <person name="Sarkar A."/>
            <person name="Schneiker S."/>
            <person name="Syed A.A."/>
            <person name="Thauer R."/>
            <person name="Vorhoelter F.-J."/>
            <person name="Weidner S."/>
            <person name="Puehler A."/>
            <person name="Reinhold-Hurek B."/>
            <person name="Kaiser O."/>
            <person name="Goesmann A."/>
        </authorList>
    </citation>
    <scope>NUCLEOTIDE SEQUENCE [LARGE SCALE GENOMIC DNA]</scope>
    <source>
        <strain>BH72</strain>
    </source>
</reference>
<gene>
    <name evidence="1" type="primary">pqqB</name>
    <name type="ordered locus">azo1187</name>
</gene>
<organism>
    <name type="scientific">Azoarcus sp. (strain BH72)</name>
    <dbReference type="NCBI Taxonomy" id="418699"/>
    <lineage>
        <taxon>Bacteria</taxon>
        <taxon>Pseudomonadati</taxon>
        <taxon>Pseudomonadota</taxon>
        <taxon>Betaproteobacteria</taxon>
        <taxon>Rhodocyclales</taxon>
        <taxon>Zoogloeaceae</taxon>
        <taxon>Azoarcus</taxon>
    </lineage>
</organism>